<gene>
    <name type="primary">KU70</name>
    <name type="ORF">CIMG_06138</name>
</gene>
<protein>
    <recommendedName>
        <fullName>ATP-dependent DNA helicase II subunit 1</fullName>
        <ecNumber>3.6.4.12</ecNumber>
    </recommendedName>
    <alternativeName>
        <fullName>ATP-dependent DNA helicase II subunit Ku70</fullName>
    </alternativeName>
</protein>
<keyword id="KW-0067">ATP-binding</keyword>
<keyword id="KW-0158">Chromosome</keyword>
<keyword id="KW-0227">DNA damage</keyword>
<keyword id="KW-0233">DNA recombination</keyword>
<keyword id="KW-0234">DNA repair</keyword>
<keyword id="KW-0238">DNA-binding</keyword>
<keyword id="KW-0347">Helicase</keyword>
<keyword id="KW-0378">Hydrolase</keyword>
<keyword id="KW-0547">Nucleotide-binding</keyword>
<keyword id="KW-0539">Nucleus</keyword>
<keyword id="KW-1185">Reference proteome</keyword>
<keyword id="KW-0779">Telomere</keyword>
<name>KU70_COCIM</name>
<organism>
    <name type="scientific">Coccidioides immitis (strain RS)</name>
    <name type="common">Valley fever fungus</name>
    <dbReference type="NCBI Taxonomy" id="246410"/>
    <lineage>
        <taxon>Eukaryota</taxon>
        <taxon>Fungi</taxon>
        <taxon>Dikarya</taxon>
        <taxon>Ascomycota</taxon>
        <taxon>Pezizomycotina</taxon>
        <taxon>Eurotiomycetes</taxon>
        <taxon>Eurotiomycetidae</taxon>
        <taxon>Onygenales</taxon>
        <taxon>Onygenaceae</taxon>
        <taxon>Coccidioides</taxon>
    </lineage>
</organism>
<dbReference type="EC" id="3.6.4.12"/>
<dbReference type="EMBL" id="GG704912">
    <property type="protein sequence ID" value="EAS30659.3"/>
    <property type="molecule type" value="Genomic_DNA"/>
</dbReference>
<dbReference type="RefSeq" id="XP_001242242.2">
    <property type="nucleotide sequence ID" value="XM_001242241.2"/>
</dbReference>
<dbReference type="SMR" id="Q1DU75"/>
<dbReference type="FunCoup" id="Q1DU75">
    <property type="interactions" value="656"/>
</dbReference>
<dbReference type="STRING" id="246410.Q1DU75"/>
<dbReference type="GeneID" id="4561485"/>
<dbReference type="KEGG" id="cim:CIMG_06138"/>
<dbReference type="VEuPathDB" id="FungiDB:CIMG_06138"/>
<dbReference type="InParanoid" id="Q1DU75"/>
<dbReference type="OMA" id="FWANVKH"/>
<dbReference type="OrthoDB" id="3249161at2759"/>
<dbReference type="Proteomes" id="UP000001261">
    <property type="component" value="Unassembled WGS sequence"/>
</dbReference>
<dbReference type="GO" id="GO:0000781">
    <property type="term" value="C:chromosome, telomeric region"/>
    <property type="evidence" value="ECO:0007669"/>
    <property type="project" value="UniProtKB-SubCell"/>
</dbReference>
<dbReference type="GO" id="GO:0043564">
    <property type="term" value="C:Ku70:Ku80 complex"/>
    <property type="evidence" value="ECO:0007669"/>
    <property type="project" value="InterPro"/>
</dbReference>
<dbReference type="GO" id="GO:0005524">
    <property type="term" value="F:ATP binding"/>
    <property type="evidence" value="ECO:0007669"/>
    <property type="project" value="UniProtKB-KW"/>
</dbReference>
<dbReference type="GO" id="GO:0016887">
    <property type="term" value="F:ATP hydrolysis activity"/>
    <property type="evidence" value="ECO:0007669"/>
    <property type="project" value="RHEA"/>
</dbReference>
<dbReference type="GO" id="GO:0003684">
    <property type="term" value="F:damaged DNA binding"/>
    <property type="evidence" value="ECO:0007669"/>
    <property type="project" value="InterPro"/>
</dbReference>
<dbReference type="GO" id="GO:0003678">
    <property type="term" value="F:DNA helicase activity"/>
    <property type="evidence" value="ECO:0007669"/>
    <property type="project" value="InterPro"/>
</dbReference>
<dbReference type="GO" id="GO:0003690">
    <property type="term" value="F:double-stranded DNA binding"/>
    <property type="evidence" value="ECO:0007669"/>
    <property type="project" value="TreeGrafter"/>
</dbReference>
<dbReference type="GO" id="GO:0042162">
    <property type="term" value="F:telomeric DNA binding"/>
    <property type="evidence" value="ECO:0007669"/>
    <property type="project" value="InterPro"/>
</dbReference>
<dbReference type="GO" id="GO:0006310">
    <property type="term" value="P:DNA recombination"/>
    <property type="evidence" value="ECO:0007669"/>
    <property type="project" value="UniProtKB-KW"/>
</dbReference>
<dbReference type="GO" id="GO:0006303">
    <property type="term" value="P:double-strand break repair via nonhomologous end joining"/>
    <property type="evidence" value="ECO:0007669"/>
    <property type="project" value="InterPro"/>
</dbReference>
<dbReference type="GO" id="GO:0000723">
    <property type="term" value="P:telomere maintenance"/>
    <property type="evidence" value="ECO:0007669"/>
    <property type="project" value="InterPro"/>
</dbReference>
<dbReference type="CDD" id="cd00788">
    <property type="entry name" value="KU70"/>
    <property type="match status" value="1"/>
</dbReference>
<dbReference type="CDD" id="cd01458">
    <property type="entry name" value="vWA_ku"/>
    <property type="match status" value="1"/>
</dbReference>
<dbReference type="FunFam" id="1.10.1600.10:FF:000004">
    <property type="entry name" value="ATP-dependent DNA helicase II subunit 1"/>
    <property type="match status" value="1"/>
</dbReference>
<dbReference type="FunFam" id="3.40.50.410:FF:000071">
    <property type="entry name" value="ATP-dependent DNA helicase II subunit 1"/>
    <property type="match status" value="1"/>
</dbReference>
<dbReference type="FunFam" id="4.10.970.10:FF:000003">
    <property type="entry name" value="ATP-dependent DNA helicase II subunit 1"/>
    <property type="match status" value="1"/>
</dbReference>
<dbReference type="FunFam" id="2.40.290.10:FF:000001">
    <property type="entry name" value="X-ray repair cross complementing 6"/>
    <property type="match status" value="1"/>
</dbReference>
<dbReference type="Gene3D" id="1.10.1600.10">
    <property type="match status" value="1"/>
</dbReference>
<dbReference type="Gene3D" id="2.40.290.10">
    <property type="match status" value="1"/>
</dbReference>
<dbReference type="Gene3D" id="4.10.970.10">
    <property type="entry name" value="Ku70, bridge and pillars"/>
    <property type="match status" value="1"/>
</dbReference>
<dbReference type="Gene3D" id="1.10.720.30">
    <property type="entry name" value="SAP domain"/>
    <property type="match status" value="1"/>
</dbReference>
<dbReference type="Gene3D" id="3.40.50.410">
    <property type="entry name" value="von Willebrand factor, type A domain"/>
    <property type="match status" value="1"/>
</dbReference>
<dbReference type="InterPro" id="IPR006165">
    <property type="entry name" value="Ku70"/>
</dbReference>
<dbReference type="InterPro" id="IPR006164">
    <property type="entry name" value="Ku70/Ku80_beta-barrel_dom"/>
</dbReference>
<dbReference type="InterPro" id="IPR027388">
    <property type="entry name" value="Ku70_bridge/pillars_dom_sf"/>
</dbReference>
<dbReference type="InterPro" id="IPR047087">
    <property type="entry name" value="KU70_core_dom"/>
</dbReference>
<dbReference type="InterPro" id="IPR005160">
    <property type="entry name" value="Ku_C"/>
</dbReference>
<dbReference type="InterPro" id="IPR005161">
    <property type="entry name" value="Ku_N"/>
</dbReference>
<dbReference type="InterPro" id="IPR003034">
    <property type="entry name" value="SAP_dom"/>
</dbReference>
<dbReference type="InterPro" id="IPR036361">
    <property type="entry name" value="SAP_dom_sf"/>
</dbReference>
<dbReference type="InterPro" id="IPR016194">
    <property type="entry name" value="SPOC-like_C_dom_sf"/>
</dbReference>
<dbReference type="InterPro" id="IPR036465">
    <property type="entry name" value="vWFA_dom_sf"/>
</dbReference>
<dbReference type="NCBIfam" id="TIGR00578">
    <property type="entry name" value="ku70"/>
    <property type="match status" value="1"/>
</dbReference>
<dbReference type="PANTHER" id="PTHR12604">
    <property type="entry name" value="KU AUTOANTIGEN DNA HELICASE"/>
    <property type="match status" value="1"/>
</dbReference>
<dbReference type="PANTHER" id="PTHR12604:SF2">
    <property type="entry name" value="X-RAY REPAIR CROSS-COMPLEMENTING PROTEIN 6"/>
    <property type="match status" value="1"/>
</dbReference>
<dbReference type="Pfam" id="PF02735">
    <property type="entry name" value="Ku"/>
    <property type="match status" value="1"/>
</dbReference>
<dbReference type="Pfam" id="PF03730">
    <property type="entry name" value="Ku_C"/>
    <property type="match status" value="1"/>
</dbReference>
<dbReference type="Pfam" id="PF03731">
    <property type="entry name" value="Ku_N"/>
    <property type="match status" value="1"/>
</dbReference>
<dbReference type="Pfam" id="PF02037">
    <property type="entry name" value="SAP"/>
    <property type="match status" value="1"/>
</dbReference>
<dbReference type="PIRSF" id="PIRSF003033">
    <property type="entry name" value="Ku70"/>
    <property type="match status" value="1"/>
</dbReference>
<dbReference type="SMART" id="SM00559">
    <property type="entry name" value="Ku78"/>
    <property type="match status" value="1"/>
</dbReference>
<dbReference type="SMART" id="SM00513">
    <property type="entry name" value="SAP"/>
    <property type="match status" value="1"/>
</dbReference>
<dbReference type="SUPFAM" id="SSF68906">
    <property type="entry name" value="SAP domain"/>
    <property type="match status" value="1"/>
</dbReference>
<dbReference type="SUPFAM" id="SSF100939">
    <property type="entry name" value="SPOC domain-like"/>
    <property type="match status" value="1"/>
</dbReference>
<dbReference type="SUPFAM" id="SSF53300">
    <property type="entry name" value="vWA-like"/>
    <property type="match status" value="1"/>
</dbReference>
<dbReference type="PROSITE" id="PS50800">
    <property type="entry name" value="SAP"/>
    <property type="match status" value="1"/>
</dbReference>
<evidence type="ECO:0000250" key="1"/>
<evidence type="ECO:0000255" key="2">
    <source>
        <dbReference type="PROSITE-ProRule" id="PRU00186"/>
    </source>
</evidence>
<evidence type="ECO:0000256" key="3">
    <source>
        <dbReference type="SAM" id="MobiDB-lite"/>
    </source>
</evidence>
<evidence type="ECO:0000305" key="4"/>
<reference key="1">
    <citation type="journal article" date="2009" name="Genome Res.">
        <title>Comparative genomic analyses of the human fungal pathogens Coccidioides and their relatives.</title>
        <authorList>
            <person name="Sharpton T.J."/>
            <person name="Stajich J.E."/>
            <person name="Rounsley S.D."/>
            <person name="Gardner M.J."/>
            <person name="Wortman J.R."/>
            <person name="Jordar V.S."/>
            <person name="Maiti R."/>
            <person name="Kodira C.D."/>
            <person name="Neafsey D.E."/>
            <person name="Zeng Q."/>
            <person name="Hung C.-Y."/>
            <person name="McMahan C."/>
            <person name="Muszewska A."/>
            <person name="Grynberg M."/>
            <person name="Mandel M.A."/>
            <person name="Kellner E.M."/>
            <person name="Barker B.M."/>
            <person name="Galgiani J.N."/>
            <person name="Orbach M.J."/>
            <person name="Kirkland T.N."/>
            <person name="Cole G.T."/>
            <person name="Henn M.R."/>
            <person name="Birren B.W."/>
            <person name="Taylor J.W."/>
        </authorList>
    </citation>
    <scope>NUCLEOTIDE SEQUENCE [LARGE SCALE GENOMIC DNA]</scope>
    <source>
        <strain>RS</strain>
    </source>
</reference>
<reference key="2">
    <citation type="journal article" date="2010" name="Genome Res.">
        <title>Population genomic sequencing of Coccidioides fungi reveals recent hybridization and transposon control.</title>
        <authorList>
            <person name="Neafsey D.E."/>
            <person name="Barker B.M."/>
            <person name="Sharpton T.J."/>
            <person name="Stajich J.E."/>
            <person name="Park D.J."/>
            <person name="Whiston E."/>
            <person name="Hung C.-Y."/>
            <person name="McMahan C."/>
            <person name="White J."/>
            <person name="Sykes S."/>
            <person name="Heiman D."/>
            <person name="Young S."/>
            <person name="Zeng Q."/>
            <person name="Abouelleil A."/>
            <person name="Aftuck L."/>
            <person name="Bessette D."/>
            <person name="Brown A."/>
            <person name="FitzGerald M."/>
            <person name="Lui A."/>
            <person name="Macdonald J.P."/>
            <person name="Priest M."/>
            <person name="Orbach M.J."/>
            <person name="Galgiani J.N."/>
            <person name="Kirkland T.N."/>
            <person name="Cole G.T."/>
            <person name="Birren B.W."/>
            <person name="Henn M.R."/>
            <person name="Taylor J.W."/>
            <person name="Rounsley S.D."/>
        </authorList>
    </citation>
    <scope>GENOME REANNOTATION</scope>
    <source>
        <strain>RS</strain>
    </source>
</reference>
<proteinExistence type="inferred from homology"/>
<feature type="chain" id="PRO_0000278341" description="ATP-dependent DNA helicase II subunit 1">
    <location>
        <begin position="1"/>
        <end position="647"/>
    </location>
</feature>
<feature type="domain" description="Ku">
    <location>
        <begin position="282"/>
        <end position="472"/>
    </location>
</feature>
<feature type="domain" description="SAP" evidence="2">
    <location>
        <begin position="610"/>
        <end position="644"/>
    </location>
</feature>
<feature type="region of interest" description="Disordered" evidence="3">
    <location>
        <begin position="1"/>
        <end position="24"/>
    </location>
</feature>
<feature type="region of interest" description="Disordered" evidence="3">
    <location>
        <begin position="569"/>
        <end position="598"/>
    </location>
</feature>
<feature type="compositionally biased region" description="Basic and acidic residues" evidence="3">
    <location>
        <begin position="1"/>
        <end position="10"/>
    </location>
</feature>
<feature type="compositionally biased region" description="Acidic residues" evidence="3">
    <location>
        <begin position="11"/>
        <end position="21"/>
    </location>
</feature>
<feature type="compositionally biased region" description="Basic and acidic residues" evidence="3">
    <location>
        <begin position="579"/>
        <end position="598"/>
    </location>
</feature>
<comment type="function">
    <text evidence="1">Single-stranded DNA-dependent ATP-dependent helicase. Involved in non-homologous end joining (NHEJ) DNA double strand break repair. DNA-binding is sequence-independent but has a high affinity to nicks in double-stranded DNA and to the ends of duplex DNA. Binds to naturally occurring chromosomal ends, and therefore provides chromosomal end protection. Required also for telomere recombination to repair telomeric ends in the absence of telomerase. KU70, of the KU70/KU80 heterodimer, binds to the stem loop of TLC1, the RNA component of telomerase. Involved in telomere maintenance. Interacts with telomeric repeats and subtelomeric sequences thereby controlling telomere length and protecting against subtelomeric rearrangement. Maintains telomeric chromatin, which is involved in silencing the expression of genes located at the telomere. Required for mating-type switching (By similarity).</text>
</comment>
<comment type="catalytic activity">
    <reaction>
        <text>ATP + H2O = ADP + phosphate + H(+)</text>
        <dbReference type="Rhea" id="RHEA:13065"/>
        <dbReference type="ChEBI" id="CHEBI:15377"/>
        <dbReference type="ChEBI" id="CHEBI:15378"/>
        <dbReference type="ChEBI" id="CHEBI:30616"/>
        <dbReference type="ChEBI" id="CHEBI:43474"/>
        <dbReference type="ChEBI" id="CHEBI:456216"/>
        <dbReference type="EC" id="3.6.4.12"/>
    </reaction>
</comment>
<comment type="subunit">
    <text evidence="1">Heterodimer of Ku70 and Ku80.</text>
</comment>
<comment type="subcellular location">
    <subcellularLocation>
        <location evidence="1">Nucleus</location>
    </subcellularLocation>
    <subcellularLocation>
        <location evidence="1">Chromosome</location>
        <location evidence="1">Telomere</location>
    </subcellularLocation>
</comment>
<comment type="similarity">
    <text evidence="4">Belongs to the ku70 family.</text>
</comment>
<accession>Q1DU75</accession>
<accession>J3K811</accession>
<sequence>MAESEYNREDDSFEEEEEVDDSGYKSVKDAVLFAIEVSESMLTAAPNPTSKKARPESPATAALKCAYHLMQQRIISNPKDMIGVLLYGTESSKFYDDDEDGRGSLPYPHCYLFTDLDVPAASDVKELHALVEDEDRAAEILVPSKEPVSMANVLFCANQIFTTKAPNFSSRRLFIVTDNDNPHSKDKVLKSAATVRAKDLYDLGVVIELFPISTPDHDFDTSKFYDDMIYRASPTDPEAPNYSCTSTKTSGADGISILNSLLSSINSKSVPRRALFSNLPLELGPEFRISVSGFLIFKRQAPARSCYVWLGGEQPQIVKGVTTLVADDSAREVEKWEIRKAYKFGGEHVAFTQEEQSALRNFGDPVIRIIGFKPMSSLPIWASTKHSTFIYPSEAGFVGSTRVFSALQQTLLKQKKFALVWFVARKNAAPVMAALIPGEEKLDDNDAQVIPPGMWIQPLPFADDIRQNPETHNIVAPEPLIDKMREIIQVLQLPKGRYDPQRYPNPSLQWHYRILQALALDEDLPDQAEDKTIPKYKQIDKRAGEHVLEWGEELETQNRLLENSKPITSTLAKRPAPSRKAEGDERATKRVRAESTGDAEVKMHYEKGSLNKLTVTILKDFLLSHNLSGTGKKADLIDRVEEFFDRK</sequence>